<proteinExistence type="inferred from homology"/>
<feature type="transit peptide" description="Mitochondrion" evidence="1">
    <location>
        <begin position="1"/>
        <end position="18"/>
    </location>
</feature>
<feature type="chain" id="PRO_0000398289" description="Lipoyl synthase, mitochondrial">
    <location>
        <begin position="19"/>
        <end position="414"/>
    </location>
</feature>
<feature type="domain" description="Radical SAM core" evidence="2">
    <location>
        <begin position="164"/>
        <end position="385"/>
    </location>
</feature>
<feature type="region of interest" description="Disordered" evidence="3">
    <location>
        <begin position="51"/>
        <end position="75"/>
    </location>
</feature>
<feature type="compositionally biased region" description="Polar residues" evidence="3">
    <location>
        <begin position="51"/>
        <end position="67"/>
    </location>
</feature>
<feature type="binding site" evidence="1">
    <location>
        <position position="150"/>
    </location>
    <ligand>
        <name>[4Fe-4S] cluster</name>
        <dbReference type="ChEBI" id="CHEBI:49883"/>
        <label>1</label>
    </ligand>
</feature>
<feature type="binding site" evidence="1">
    <location>
        <position position="155"/>
    </location>
    <ligand>
        <name>[4Fe-4S] cluster</name>
        <dbReference type="ChEBI" id="CHEBI:49883"/>
        <label>1</label>
    </ligand>
</feature>
<feature type="binding site" evidence="1">
    <location>
        <position position="161"/>
    </location>
    <ligand>
        <name>[4Fe-4S] cluster</name>
        <dbReference type="ChEBI" id="CHEBI:49883"/>
        <label>1</label>
    </ligand>
</feature>
<feature type="binding site" evidence="1">
    <location>
        <position position="181"/>
    </location>
    <ligand>
        <name>[4Fe-4S] cluster</name>
        <dbReference type="ChEBI" id="CHEBI:49883"/>
        <label>2</label>
        <note>4Fe-4S-S-AdoMet</note>
    </ligand>
</feature>
<feature type="binding site" evidence="1">
    <location>
        <position position="185"/>
    </location>
    <ligand>
        <name>[4Fe-4S] cluster</name>
        <dbReference type="ChEBI" id="CHEBI:49883"/>
        <label>2</label>
        <note>4Fe-4S-S-AdoMet</note>
    </ligand>
</feature>
<feature type="binding site" evidence="1">
    <location>
        <position position="188"/>
    </location>
    <ligand>
        <name>[4Fe-4S] cluster</name>
        <dbReference type="ChEBI" id="CHEBI:49883"/>
        <label>2</label>
        <note>4Fe-4S-S-AdoMet</note>
    </ligand>
</feature>
<feature type="binding site" evidence="1">
    <location>
        <position position="396"/>
    </location>
    <ligand>
        <name>[4Fe-4S] cluster</name>
        <dbReference type="ChEBI" id="CHEBI:49883"/>
        <label>1</label>
    </ligand>
</feature>
<name>LIPA_YEAS1</name>
<evidence type="ECO:0000255" key="1">
    <source>
        <dbReference type="HAMAP-Rule" id="MF_03123"/>
    </source>
</evidence>
<evidence type="ECO:0000255" key="2">
    <source>
        <dbReference type="PROSITE-ProRule" id="PRU01266"/>
    </source>
</evidence>
<evidence type="ECO:0000256" key="3">
    <source>
        <dbReference type="SAM" id="MobiDB-lite"/>
    </source>
</evidence>
<comment type="function">
    <text evidence="1">Catalyzes the radical-mediated insertion of two sulfur atoms into the C-6 and C-8 positions of the octanoyl moiety bound to the lipoyl domains of lipoate-dependent enzymes, thereby converting the octanoylated domains into lipoylated derivatives.</text>
</comment>
<comment type="catalytic activity">
    <reaction evidence="1">
        <text>[[Fe-S] cluster scaffold protein carrying a second [4Fe-4S](2+) cluster] + N(6)-octanoyl-L-lysyl-[protein] + 2 oxidized [2Fe-2S]-[ferredoxin] + 2 S-adenosyl-L-methionine + 4 H(+) = [[Fe-S] cluster scaffold protein] + N(6)-[(R)-dihydrolipoyl]-L-lysyl-[protein] + 4 Fe(3+) + 2 hydrogen sulfide + 2 5'-deoxyadenosine + 2 L-methionine + 2 reduced [2Fe-2S]-[ferredoxin]</text>
        <dbReference type="Rhea" id="RHEA:16585"/>
        <dbReference type="Rhea" id="RHEA-COMP:9928"/>
        <dbReference type="Rhea" id="RHEA-COMP:10000"/>
        <dbReference type="Rhea" id="RHEA-COMP:10001"/>
        <dbReference type="Rhea" id="RHEA-COMP:10475"/>
        <dbReference type="Rhea" id="RHEA-COMP:14568"/>
        <dbReference type="Rhea" id="RHEA-COMP:14569"/>
        <dbReference type="ChEBI" id="CHEBI:15378"/>
        <dbReference type="ChEBI" id="CHEBI:17319"/>
        <dbReference type="ChEBI" id="CHEBI:29034"/>
        <dbReference type="ChEBI" id="CHEBI:29919"/>
        <dbReference type="ChEBI" id="CHEBI:33722"/>
        <dbReference type="ChEBI" id="CHEBI:33737"/>
        <dbReference type="ChEBI" id="CHEBI:33738"/>
        <dbReference type="ChEBI" id="CHEBI:57844"/>
        <dbReference type="ChEBI" id="CHEBI:59789"/>
        <dbReference type="ChEBI" id="CHEBI:78809"/>
        <dbReference type="ChEBI" id="CHEBI:83100"/>
        <dbReference type="EC" id="2.8.1.8"/>
    </reaction>
</comment>
<comment type="cofactor">
    <cofactor evidence="1">
        <name>[4Fe-4S] cluster</name>
        <dbReference type="ChEBI" id="CHEBI:49883"/>
    </cofactor>
    <text evidence="1">Binds 2 [4Fe-4S] clusters per subunit. One cluster is coordinated with 3 cysteines and an exchangeable S-adenosyl-L-methionine.</text>
</comment>
<comment type="pathway">
    <text evidence="1">Protein modification; protein lipoylation via endogenous pathway; protein N(6)-(lipoyl)lysine from octanoyl-[acyl-carrier-protein]: step 2/2.</text>
</comment>
<comment type="subcellular location">
    <subcellularLocation>
        <location evidence="1">Mitochondrion</location>
    </subcellularLocation>
</comment>
<comment type="similarity">
    <text evidence="1">Belongs to the radical SAM superfamily. Lipoyl synthase family.</text>
</comment>
<organism>
    <name type="scientific">Saccharomyces cerevisiae (strain RM11-1a)</name>
    <name type="common">Baker's yeast</name>
    <dbReference type="NCBI Taxonomy" id="285006"/>
    <lineage>
        <taxon>Eukaryota</taxon>
        <taxon>Fungi</taxon>
        <taxon>Dikarya</taxon>
        <taxon>Ascomycota</taxon>
        <taxon>Saccharomycotina</taxon>
        <taxon>Saccharomycetes</taxon>
        <taxon>Saccharomycetales</taxon>
        <taxon>Saccharomycetaceae</taxon>
        <taxon>Saccharomyces</taxon>
    </lineage>
</organism>
<keyword id="KW-0004">4Fe-4S</keyword>
<keyword id="KW-0408">Iron</keyword>
<keyword id="KW-0411">Iron-sulfur</keyword>
<keyword id="KW-0479">Metal-binding</keyword>
<keyword id="KW-0496">Mitochondrion</keyword>
<keyword id="KW-0949">S-adenosyl-L-methionine</keyword>
<keyword id="KW-0808">Transferase</keyword>
<keyword id="KW-0809">Transit peptide</keyword>
<gene>
    <name evidence="1" type="primary">LIP5</name>
    <name type="ORF">SCRG_01588</name>
</gene>
<dbReference type="EC" id="2.8.1.8" evidence="1"/>
<dbReference type="EMBL" id="CH408045">
    <property type="protein sequence ID" value="EDV10779.1"/>
    <property type="molecule type" value="Genomic_DNA"/>
</dbReference>
<dbReference type="SMR" id="B3LJM6"/>
<dbReference type="HOGENOM" id="CLU_033144_0_2_1"/>
<dbReference type="OrthoDB" id="20491at4893"/>
<dbReference type="UniPathway" id="UPA00538">
    <property type="reaction ID" value="UER00593"/>
</dbReference>
<dbReference type="Proteomes" id="UP000008335">
    <property type="component" value="Unassembled WGS sequence"/>
</dbReference>
<dbReference type="GO" id="GO:0005739">
    <property type="term" value="C:mitochondrion"/>
    <property type="evidence" value="ECO:0007669"/>
    <property type="project" value="UniProtKB-SubCell"/>
</dbReference>
<dbReference type="GO" id="GO:0051539">
    <property type="term" value="F:4 iron, 4 sulfur cluster binding"/>
    <property type="evidence" value="ECO:0007669"/>
    <property type="project" value="UniProtKB-UniRule"/>
</dbReference>
<dbReference type="GO" id="GO:0016992">
    <property type="term" value="F:lipoate synthase activity"/>
    <property type="evidence" value="ECO:0007669"/>
    <property type="project" value="UniProtKB-UniRule"/>
</dbReference>
<dbReference type="GO" id="GO:0046872">
    <property type="term" value="F:metal ion binding"/>
    <property type="evidence" value="ECO:0007669"/>
    <property type="project" value="UniProtKB-KW"/>
</dbReference>
<dbReference type="CDD" id="cd01335">
    <property type="entry name" value="Radical_SAM"/>
    <property type="match status" value="1"/>
</dbReference>
<dbReference type="FunFam" id="3.20.20.70:FF:000036">
    <property type="entry name" value="Lipoyl synthase, mitochondrial"/>
    <property type="match status" value="1"/>
</dbReference>
<dbReference type="Gene3D" id="3.20.20.70">
    <property type="entry name" value="Aldolase class I"/>
    <property type="match status" value="1"/>
</dbReference>
<dbReference type="HAMAP" id="MF_00206">
    <property type="entry name" value="Lipoyl_synth"/>
    <property type="match status" value="1"/>
</dbReference>
<dbReference type="InterPro" id="IPR013785">
    <property type="entry name" value="Aldolase_TIM"/>
</dbReference>
<dbReference type="InterPro" id="IPR006638">
    <property type="entry name" value="Elp3/MiaA/NifB-like_rSAM"/>
</dbReference>
<dbReference type="InterPro" id="IPR031691">
    <property type="entry name" value="LIAS_N"/>
</dbReference>
<dbReference type="InterPro" id="IPR003698">
    <property type="entry name" value="Lipoyl_synth"/>
</dbReference>
<dbReference type="InterPro" id="IPR007197">
    <property type="entry name" value="rSAM"/>
</dbReference>
<dbReference type="NCBIfam" id="TIGR00510">
    <property type="entry name" value="lipA"/>
    <property type="match status" value="1"/>
</dbReference>
<dbReference type="NCBIfam" id="NF004019">
    <property type="entry name" value="PRK05481.1"/>
    <property type="match status" value="1"/>
</dbReference>
<dbReference type="NCBIfam" id="NF009544">
    <property type="entry name" value="PRK12928.1"/>
    <property type="match status" value="1"/>
</dbReference>
<dbReference type="PANTHER" id="PTHR10949">
    <property type="entry name" value="LIPOYL SYNTHASE"/>
    <property type="match status" value="1"/>
</dbReference>
<dbReference type="PANTHER" id="PTHR10949:SF0">
    <property type="entry name" value="LIPOYL SYNTHASE, MITOCHONDRIAL"/>
    <property type="match status" value="1"/>
</dbReference>
<dbReference type="Pfam" id="PF16881">
    <property type="entry name" value="LIAS_N"/>
    <property type="match status" value="1"/>
</dbReference>
<dbReference type="Pfam" id="PF04055">
    <property type="entry name" value="Radical_SAM"/>
    <property type="match status" value="1"/>
</dbReference>
<dbReference type="PIRSF" id="PIRSF005963">
    <property type="entry name" value="Lipoyl_synth"/>
    <property type="match status" value="1"/>
</dbReference>
<dbReference type="SFLD" id="SFLDF00271">
    <property type="entry name" value="lipoyl_synthase"/>
    <property type="match status" value="1"/>
</dbReference>
<dbReference type="SFLD" id="SFLDG01058">
    <property type="entry name" value="lipoyl_synthase_like"/>
    <property type="match status" value="1"/>
</dbReference>
<dbReference type="SMART" id="SM00729">
    <property type="entry name" value="Elp3"/>
    <property type="match status" value="1"/>
</dbReference>
<dbReference type="SUPFAM" id="SSF102114">
    <property type="entry name" value="Radical SAM enzymes"/>
    <property type="match status" value="1"/>
</dbReference>
<dbReference type="PROSITE" id="PS51918">
    <property type="entry name" value="RADICAL_SAM"/>
    <property type="match status" value="1"/>
</dbReference>
<protein>
    <recommendedName>
        <fullName evidence="1">Lipoyl synthase, mitochondrial</fullName>
        <ecNumber evidence="1">2.8.1.8</ecNumber>
    </recommendedName>
    <alternativeName>
        <fullName evidence="1">Lipoate synthase</fullName>
        <shortName evidence="1">LS</shortName>
        <shortName evidence="1">Lip-syn</shortName>
    </alternativeName>
    <alternativeName>
        <fullName evidence="1">Lipoic acid synthase</fullName>
    </alternativeName>
</protein>
<reference key="1">
    <citation type="submission" date="2005-03" db="EMBL/GenBank/DDBJ databases">
        <title>Annotation of the Saccharomyces cerevisiae RM11-1a genome.</title>
        <authorList>
            <consortium name="The Broad Institute Genome Sequencing Platform"/>
            <person name="Birren B.W."/>
            <person name="Lander E.S."/>
            <person name="Galagan J.E."/>
            <person name="Nusbaum C."/>
            <person name="Devon K."/>
            <person name="Cuomo C."/>
            <person name="Jaffe D.B."/>
            <person name="Butler J."/>
            <person name="Alvarez P."/>
            <person name="Gnerre S."/>
            <person name="Grabherr M."/>
            <person name="Kleber M."/>
            <person name="Mauceli E.W."/>
            <person name="Brockman W."/>
            <person name="MacCallum I.A."/>
            <person name="Rounsley S."/>
            <person name="Young S.K."/>
            <person name="LaButti K."/>
            <person name="Pushparaj V."/>
            <person name="DeCaprio D."/>
            <person name="Crawford M."/>
            <person name="Koehrsen M."/>
            <person name="Engels R."/>
            <person name="Montgomery P."/>
            <person name="Pearson M."/>
            <person name="Howarth C."/>
            <person name="Larson L."/>
            <person name="Luoma S."/>
            <person name="White J."/>
            <person name="O'Leary S."/>
            <person name="Kodira C.D."/>
            <person name="Zeng Q."/>
            <person name="Yandava C."/>
            <person name="Alvarado L."/>
            <person name="Pratt S."/>
            <person name="Kruglyak L."/>
        </authorList>
    </citation>
    <scope>NUCLEOTIDE SEQUENCE [LARGE SCALE GENOMIC DNA]</scope>
    <source>
        <strain>RM11-1a</strain>
    </source>
</reference>
<sequence length="414" mass="46247">MYRRSVGVLFVGRNTRWISSTIRCGTSATRPIRSNALNTDSDNASVRVPVGNSTEVENATSQLTGTSGKRRKGNRKRITEFKDALNLGPSFADFVSGKASKMILDPLEKARQNTEEAKKLPRWLKVPIPKGTNYHKLKGDVKELGLSTVCEEARCPNIGECWGGKDKSKATATIMLLGDTCTRGCRFCSVKTNRTPSKPDPMEPENTAEAIKRWGLGYVVLTTVDRDDLVDGGANHLAETVRKIKQKAPNTLVETLSGDFRGDLKMVDIMAQCGLDVYAHNLETVESLTPHVRDRRATYRQSLSVLERAKATVPSLITKTSIMLGLGETDEQITQTLKDLRNIQCDVVTFGQYMRPTKRHMKVVEYVKPEKFDYWKERALEMGFLYCASGPLVRSSYKAGEAFIENVLKKRNMK</sequence>
<accession>B3LJM6</accession>